<evidence type="ECO:0000250" key="1">
    <source>
        <dbReference type="UniProtKB" id="B9VUU3"/>
    </source>
</evidence>
<evidence type="ECO:0000250" key="2">
    <source>
        <dbReference type="UniProtKB" id="P03300"/>
    </source>
</evidence>
<evidence type="ECO:0000250" key="3">
    <source>
        <dbReference type="UniProtKB" id="P03301"/>
    </source>
</evidence>
<evidence type="ECO:0000250" key="4">
    <source>
        <dbReference type="UniProtKB" id="P03303"/>
    </source>
</evidence>
<evidence type="ECO:0000250" key="5">
    <source>
        <dbReference type="UniProtKB" id="P03313"/>
    </source>
</evidence>
<evidence type="ECO:0000250" key="6">
    <source>
        <dbReference type="UniProtKB" id="P04936"/>
    </source>
</evidence>
<evidence type="ECO:0000250" key="7">
    <source>
        <dbReference type="UniProtKB" id="Q66478"/>
    </source>
</evidence>
<evidence type="ECO:0000250" key="8">
    <source>
        <dbReference type="UniProtKB" id="Q9QF31"/>
    </source>
</evidence>
<evidence type="ECO:0000255" key="9"/>
<evidence type="ECO:0000255" key="10">
    <source>
        <dbReference type="PROSITE-ProRule" id="PRU00539"/>
    </source>
</evidence>
<evidence type="ECO:0000255" key="11">
    <source>
        <dbReference type="PROSITE-ProRule" id="PRU00551"/>
    </source>
</evidence>
<evidence type="ECO:0000255" key="12">
    <source>
        <dbReference type="PROSITE-ProRule" id="PRU01222"/>
    </source>
</evidence>
<evidence type="ECO:0000269" key="13">
    <source>
    </source>
</evidence>
<evidence type="ECO:0000305" key="14"/>
<dbReference type="EC" id="3.4.22.29" evidence="2"/>
<dbReference type="EC" id="3.6.1.15" evidence="2"/>
<dbReference type="EC" id="3.4.22.28" evidence="12"/>
<dbReference type="EC" id="2.7.7.48" evidence="10"/>
<dbReference type="EMBL" id="U16283">
    <property type="protein sequence ID" value="AAA65044.1"/>
    <property type="molecule type" value="Genomic_RNA"/>
</dbReference>
<dbReference type="SMR" id="Q66474"/>
<dbReference type="MEROPS" id="C03.011"/>
<dbReference type="MEROPS" id="N08.001"/>
<dbReference type="Proteomes" id="UP000002693">
    <property type="component" value="Genome"/>
</dbReference>
<dbReference type="GO" id="GO:0044162">
    <property type="term" value="C:host cell cytoplasmic vesicle membrane"/>
    <property type="evidence" value="ECO:0007669"/>
    <property type="project" value="UniProtKB-SubCell"/>
</dbReference>
<dbReference type="GO" id="GO:0042025">
    <property type="term" value="C:host cell nucleus"/>
    <property type="evidence" value="ECO:0007669"/>
    <property type="project" value="UniProtKB-SubCell"/>
</dbReference>
<dbReference type="GO" id="GO:0016020">
    <property type="term" value="C:membrane"/>
    <property type="evidence" value="ECO:0007669"/>
    <property type="project" value="UniProtKB-KW"/>
</dbReference>
<dbReference type="GO" id="GO:0039618">
    <property type="term" value="C:T=pseudo3 icosahedral viral capsid"/>
    <property type="evidence" value="ECO:0007669"/>
    <property type="project" value="UniProtKB-KW"/>
</dbReference>
<dbReference type="GO" id="GO:0005524">
    <property type="term" value="F:ATP binding"/>
    <property type="evidence" value="ECO:0007669"/>
    <property type="project" value="UniProtKB-KW"/>
</dbReference>
<dbReference type="GO" id="GO:0016887">
    <property type="term" value="F:ATP hydrolysis activity"/>
    <property type="evidence" value="ECO:0007669"/>
    <property type="project" value="InterPro"/>
</dbReference>
<dbReference type="GO" id="GO:0015267">
    <property type="term" value="F:channel activity"/>
    <property type="evidence" value="ECO:0007669"/>
    <property type="project" value="UniProtKB-KW"/>
</dbReference>
<dbReference type="GO" id="GO:0004197">
    <property type="term" value="F:cysteine-type endopeptidase activity"/>
    <property type="evidence" value="ECO:0007669"/>
    <property type="project" value="UniProtKB-EC"/>
</dbReference>
<dbReference type="GO" id="GO:0003723">
    <property type="term" value="F:RNA binding"/>
    <property type="evidence" value="ECO:0007669"/>
    <property type="project" value="UniProtKB-KW"/>
</dbReference>
<dbReference type="GO" id="GO:0003724">
    <property type="term" value="F:RNA helicase activity"/>
    <property type="evidence" value="ECO:0007669"/>
    <property type="project" value="InterPro"/>
</dbReference>
<dbReference type="GO" id="GO:0003968">
    <property type="term" value="F:RNA-directed RNA polymerase activity"/>
    <property type="evidence" value="ECO:0007669"/>
    <property type="project" value="UniProtKB-KW"/>
</dbReference>
<dbReference type="GO" id="GO:0005198">
    <property type="term" value="F:structural molecule activity"/>
    <property type="evidence" value="ECO:0007669"/>
    <property type="project" value="InterPro"/>
</dbReference>
<dbReference type="GO" id="GO:0008270">
    <property type="term" value="F:zinc ion binding"/>
    <property type="evidence" value="ECO:0007669"/>
    <property type="project" value="UniProtKB-KW"/>
</dbReference>
<dbReference type="GO" id="GO:0006260">
    <property type="term" value="P:DNA replication"/>
    <property type="evidence" value="ECO:0007669"/>
    <property type="project" value="UniProtKB-KW"/>
</dbReference>
<dbReference type="GO" id="GO:0006351">
    <property type="term" value="P:DNA-templated transcription"/>
    <property type="evidence" value="ECO:0007669"/>
    <property type="project" value="InterPro"/>
</dbReference>
<dbReference type="GO" id="GO:0075509">
    <property type="term" value="P:endocytosis involved in viral entry into host cell"/>
    <property type="evidence" value="ECO:0007669"/>
    <property type="project" value="UniProtKB-KW"/>
</dbReference>
<dbReference type="GO" id="GO:0034220">
    <property type="term" value="P:monoatomic ion transmembrane transport"/>
    <property type="evidence" value="ECO:0007669"/>
    <property type="project" value="UniProtKB-KW"/>
</dbReference>
<dbReference type="GO" id="GO:0006508">
    <property type="term" value="P:proteolysis"/>
    <property type="evidence" value="ECO:0007669"/>
    <property type="project" value="UniProtKB-KW"/>
</dbReference>
<dbReference type="GO" id="GO:0044694">
    <property type="term" value="P:symbiont genome entry into host cell via pore formation in plasma membrane"/>
    <property type="evidence" value="ECO:0007669"/>
    <property type="project" value="UniProtKB-KW"/>
</dbReference>
<dbReference type="GO" id="GO:0039520">
    <property type="term" value="P:symbiont-mediated activation of host autophagy"/>
    <property type="evidence" value="ECO:0000250"/>
    <property type="project" value="UniProtKB"/>
</dbReference>
<dbReference type="GO" id="GO:0039540">
    <property type="term" value="P:symbiont-mediated suppression of host cytoplasmic pattern recognition receptor signaling pathway via inhibition of RIG-I activity"/>
    <property type="evidence" value="ECO:0007669"/>
    <property type="project" value="UniProtKB-KW"/>
</dbReference>
<dbReference type="GO" id="GO:0039522">
    <property type="term" value="P:symbiont-mediated suppression of host mRNA export from nucleus"/>
    <property type="evidence" value="ECO:0007669"/>
    <property type="project" value="UniProtKB-KW"/>
</dbReference>
<dbReference type="GO" id="GO:0039694">
    <property type="term" value="P:viral RNA genome replication"/>
    <property type="evidence" value="ECO:0007669"/>
    <property type="project" value="InterPro"/>
</dbReference>
<dbReference type="GO" id="GO:0019062">
    <property type="term" value="P:virion attachment to host cell"/>
    <property type="evidence" value="ECO:0007669"/>
    <property type="project" value="UniProtKB-KW"/>
</dbReference>
<dbReference type="CDD" id="cd23213">
    <property type="entry name" value="Enterovirus_RdRp"/>
    <property type="match status" value="1"/>
</dbReference>
<dbReference type="CDD" id="cd00205">
    <property type="entry name" value="rhv_like"/>
    <property type="match status" value="3"/>
</dbReference>
<dbReference type="FunFam" id="1.20.960.20:FF:000001">
    <property type="entry name" value="Genome polyprotein"/>
    <property type="match status" value="1"/>
</dbReference>
<dbReference type="FunFam" id="2.40.10.10:FF:000018">
    <property type="entry name" value="Genome polyprotein"/>
    <property type="match status" value="1"/>
</dbReference>
<dbReference type="FunFam" id="2.40.10.10:FF:000020">
    <property type="entry name" value="Genome polyprotein"/>
    <property type="match status" value="1"/>
</dbReference>
<dbReference type="FunFam" id="2.40.10.10:FF:000022">
    <property type="entry name" value="Genome polyprotein"/>
    <property type="match status" value="1"/>
</dbReference>
<dbReference type="FunFam" id="2.60.120.20:FF:000001">
    <property type="entry name" value="Genome polyprotein"/>
    <property type="match status" value="1"/>
</dbReference>
<dbReference type="FunFam" id="2.60.120.20:FF:000002">
    <property type="entry name" value="Genome polyprotein"/>
    <property type="match status" value="1"/>
</dbReference>
<dbReference type="FunFam" id="2.60.120.20:FF:000004">
    <property type="entry name" value="Genome polyprotein"/>
    <property type="match status" value="1"/>
</dbReference>
<dbReference type="FunFam" id="3.30.70.270:FF:000008">
    <property type="entry name" value="Genome polyprotein"/>
    <property type="match status" value="1"/>
</dbReference>
<dbReference type="FunFam" id="4.10.80.10:FF:000001">
    <property type="entry name" value="Genome polyprotein"/>
    <property type="match status" value="1"/>
</dbReference>
<dbReference type="FunFam" id="4.10.880.10:FF:000001">
    <property type="entry name" value="Genome polyprotein"/>
    <property type="match status" value="1"/>
</dbReference>
<dbReference type="FunFam" id="4.10.880.10:FF:000002">
    <property type="entry name" value="Genome polyprotein"/>
    <property type="match status" value="1"/>
</dbReference>
<dbReference type="Gene3D" id="1.20.960.20">
    <property type="match status" value="1"/>
</dbReference>
<dbReference type="Gene3D" id="2.60.120.20">
    <property type="match status" value="3"/>
</dbReference>
<dbReference type="Gene3D" id="3.30.70.270">
    <property type="match status" value="1"/>
</dbReference>
<dbReference type="Gene3D" id="4.10.80.10">
    <property type="entry name" value="Picornavirus coat protein VP4"/>
    <property type="match status" value="1"/>
</dbReference>
<dbReference type="Gene3D" id="6.10.20.20">
    <property type="entry name" value="Poliovirus 3A protein-like"/>
    <property type="match status" value="1"/>
</dbReference>
<dbReference type="Gene3D" id="4.10.880.10">
    <property type="entry name" value="Poliovirus 3D polymerase Domain 1 (Nucleotidyltransferase)"/>
    <property type="match status" value="2"/>
</dbReference>
<dbReference type="Gene3D" id="2.40.10.10">
    <property type="entry name" value="Trypsin-like serine proteases"/>
    <property type="match status" value="4"/>
</dbReference>
<dbReference type="InterPro" id="IPR003593">
    <property type="entry name" value="AAA+_ATPase"/>
</dbReference>
<dbReference type="InterPro" id="IPR043502">
    <property type="entry name" value="DNA/RNA_pol_sf"/>
</dbReference>
<dbReference type="InterPro" id="IPR000605">
    <property type="entry name" value="Helicase_SF3_ssDNA/RNA_vir"/>
</dbReference>
<dbReference type="InterPro" id="IPR014759">
    <property type="entry name" value="Helicase_SF3_ssRNA_vir"/>
</dbReference>
<dbReference type="InterPro" id="IPR027417">
    <property type="entry name" value="P-loop_NTPase"/>
</dbReference>
<dbReference type="InterPro" id="IPR014838">
    <property type="entry name" value="P3A"/>
</dbReference>
<dbReference type="InterPro" id="IPR036203">
    <property type="entry name" value="P3A_soluble_dom"/>
</dbReference>
<dbReference type="InterPro" id="IPR044067">
    <property type="entry name" value="PCV_3C_PRO"/>
</dbReference>
<dbReference type="InterPro" id="IPR000081">
    <property type="entry name" value="Peptidase_C3"/>
</dbReference>
<dbReference type="InterPro" id="IPR000199">
    <property type="entry name" value="Peptidase_C3A/C3B_picornavir"/>
</dbReference>
<dbReference type="InterPro" id="IPR009003">
    <property type="entry name" value="Peptidase_S1_PA"/>
</dbReference>
<dbReference type="InterPro" id="IPR043504">
    <property type="entry name" value="Peptidase_S1_PA_chymotrypsin"/>
</dbReference>
<dbReference type="InterPro" id="IPR003138">
    <property type="entry name" value="Pico_P1A"/>
</dbReference>
<dbReference type="InterPro" id="IPR036988">
    <property type="entry name" value="Pico_P1A_sf"/>
</dbReference>
<dbReference type="InterPro" id="IPR002527">
    <property type="entry name" value="Pico_P2B"/>
</dbReference>
<dbReference type="InterPro" id="IPR001676">
    <property type="entry name" value="Picornavirus_capsid"/>
</dbReference>
<dbReference type="InterPro" id="IPR043128">
    <property type="entry name" value="Rev_trsase/Diguanyl_cyclase"/>
</dbReference>
<dbReference type="InterPro" id="IPR033703">
    <property type="entry name" value="Rhv-like"/>
</dbReference>
<dbReference type="InterPro" id="IPR001205">
    <property type="entry name" value="RNA-dir_pol_C"/>
</dbReference>
<dbReference type="InterPro" id="IPR007094">
    <property type="entry name" value="RNA-dir_pol_PSvirus"/>
</dbReference>
<dbReference type="InterPro" id="IPR029053">
    <property type="entry name" value="Viral_coat"/>
</dbReference>
<dbReference type="Pfam" id="PF08727">
    <property type="entry name" value="P3A"/>
    <property type="match status" value="1"/>
</dbReference>
<dbReference type="Pfam" id="PF00548">
    <property type="entry name" value="Peptidase_C3"/>
    <property type="match status" value="1"/>
</dbReference>
<dbReference type="Pfam" id="PF02226">
    <property type="entry name" value="Pico_P1A"/>
    <property type="match status" value="1"/>
</dbReference>
<dbReference type="Pfam" id="PF00947">
    <property type="entry name" value="Pico_P2A"/>
    <property type="match status" value="1"/>
</dbReference>
<dbReference type="Pfam" id="PF01552">
    <property type="entry name" value="Pico_P2B"/>
    <property type="match status" value="1"/>
</dbReference>
<dbReference type="Pfam" id="PF00680">
    <property type="entry name" value="RdRP_1"/>
    <property type="match status" value="1"/>
</dbReference>
<dbReference type="Pfam" id="PF00073">
    <property type="entry name" value="Rhv"/>
    <property type="match status" value="2"/>
</dbReference>
<dbReference type="Pfam" id="PF22663">
    <property type="entry name" value="Rhv_5"/>
    <property type="match status" value="1"/>
</dbReference>
<dbReference type="Pfam" id="PF00910">
    <property type="entry name" value="RNA_helicase"/>
    <property type="match status" value="1"/>
</dbReference>
<dbReference type="SMART" id="SM00382">
    <property type="entry name" value="AAA"/>
    <property type="match status" value="1"/>
</dbReference>
<dbReference type="SUPFAM" id="SSF56672">
    <property type="entry name" value="DNA/RNA polymerases"/>
    <property type="match status" value="1"/>
</dbReference>
<dbReference type="SUPFAM" id="SSF52540">
    <property type="entry name" value="P-loop containing nucleoside triphosphate hydrolases"/>
    <property type="match status" value="1"/>
</dbReference>
<dbReference type="SUPFAM" id="SSF88633">
    <property type="entry name" value="Positive stranded ssRNA viruses"/>
    <property type="match status" value="2"/>
</dbReference>
<dbReference type="SUPFAM" id="SSF89043">
    <property type="entry name" value="Soluble domain of poliovirus core protein 3a"/>
    <property type="match status" value="1"/>
</dbReference>
<dbReference type="SUPFAM" id="SSF50494">
    <property type="entry name" value="Trypsin-like serine proteases"/>
    <property type="match status" value="2"/>
</dbReference>
<dbReference type="PROSITE" id="PS51874">
    <property type="entry name" value="PCV_3C_PRO"/>
    <property type="match status" value="1"/>
</dbReference>
<dbReference type="PROSITE" id="PS50507">
    <property type="entry name" value="RDRP_SSRNA_POS"/>
    <property type="match status" value="1"/>
</dbReference>
<dbReference type="PROSITE" id="PS51218">
    <property type="entry name" value="SF3_HELICASE_2"/>
    <property type="match status" value="1"/>
</dbReference>
<protein>
    <recommendedName>
        <fullName>Genome polyprotein</fullName>
    </recommendedName>
    <component>
        <recommendedName>
            <fullName>P1</fullName>
        </recommendedName>
    </component>
    <component>
        <recommendedName>
            <fullName>Capsid protein VP0</fullName>
        </recommendedName>
        <alternativeName>
            <fullName>VP4-VP2</fullName>
        </alternativeName>
    </component>
    <component>
        <recommendedName>
            <fullName>Capsid protein VP4</fullName>
        </recommendedName>
        <alternativeName>
            <fullName>P1A</fullName>
        </alternativeName>
        <alternativeName>
            <fullName>Virion protein 4</fullName>
        </alternativeName>
    </component>
    <component>
        <recommendedName>
            <fullName>Capsid protein VP2</fullName>
        </recommendedName>
        <alternativeName>
            <fullName>P1B</fullName>
        </alternativeName>
        <alternativeName>
            <fullName>Virion protein 2</fullName>
        </alternativeName>
    </component>
    <component>
        <recommendedName>
            <fullName>Capsid protein VP3</fullName>
        </recommendedName>
        <alternativeName>
            <fullName>P1C</fullName>
        </alternativeName>
        <alternativeName>
            <fullName>Virion protein 3</fullName>
        </alternativeName>
    </component>
    <component>
        <recommendedName>
            <fullName>Capsid protein VP1</fullName>
        </recommendedName>
        <alternativeName>
            <fullName>P1D</fullName>
        </alternativeName>
        <alternativeName>
            <fullName>Virion protein 1</fullName>
        </alternativeName>
    </component>
    <component>
        <recommendedName>
            <fullName>P2</fullName>
        </recommendedName>
    </component>
    <component>
        <recommendedName>
            <fullName>Protease 2A</fullName>
            <shortName>P2A</shortName>
            <ecNumber evidence="2">3.4.22.29</ecNumber>
        </recommendedName>
        <alternativeName>
            <fullName>Picornain 2A</fullName>
        </alternativeName>
        <alternativeName>
            <fullName>Protein 2A</fullName>
        </alternativeName>
    </component>
    <component>
        <recommendedName>
            <fullName>Protein 2B</fullName>
            <shortName>P2B</shortName>
        </recommendedName>
    </component>
    <component>
        <recommendedName>
            <fullName>Protein 2C</fullName>
            <shortName>P2C</shortName>
            <ecNumber evidence="2">3.6.1.15</ecNumber>
        </recommendedName>
    </component>
    <component>
        <recommendedName>
            <fullName>P3</fullName>
        </recommendedName>
    </component>
    <component>
        <recommendedName>
            <fullName>Protein 3AB</fullName>
        </recommendedName>
    </component>
    <component>
        <recommendedName>
            <fullName>Protein 3A</fullName>
            <shortName>P3A</shortName>
        </recommendedName>
    </component>
    <component>
        <recommendedName>
            <fullName>Viral protein genome-linked</fullName>
            <shortName>VPg</shortName>
        </recommendedName>
        <alternativeName>
            <fullName>Protein 3B</fullName>
            <shortName>P3B</shortName>
        </alternativeName>
    </component>
    <component>
        <recommendedName>
            <fullName>Protein 3CD</fullName>
            <ecNumber>3.4.22.28</ecNumber>
        </recommendedName>
    </component>
    <component>
        <recommendedName>
            <fullName evidence="12">Protease 3C</fullName>
            <ecNumber evidence="12">3.4.22.28</ecNumber>
        </recommendedName>
        <alternativeName>
            <fullName evidence="12">Picornain 3C</fullName>
            <shortName evidence="12">P3C</shortName>
        </alternativeName>
    </component>
    <component>
        <recommendedName>
            <fullName evidence="10">RNA-directed RNA polymerase</fullName>
            <shortName>RdRp</shortName>
            <ecNumber evidence="10">2.7.7.48</ecNumber>
        </recommendedName>
        <alternativeName>
            <fullName>3D polymerase</fullName>
            <shortName>3Dpol</shortName>
        </alternativeName>
        <alternativeName>
            <fullName>Protein 3D</fullName>
            <shortName>3D</shortName>
        </alternativeName>
    </component>
</protein>
<feature type="initiator methionine" description="Removed; by host" evidence="2">
    <location>
        <position position="1"/>
    </location>
</feature>
<feature type="chain" id="PRO_0000426386" description="Genome polyprotein">
    <location>
        <begin position="2"/>
        <end position="2191"/>
    </location>
</feature>
<feature type="chain" id="PRO_0000426387" description="P1">
    <location>
        <begin position="2"/>
        <end position="857"/>
    </location>
</feature>
<feature type="chain" id="PRO_0000426388" description="Capsid protein VP0">
    <location>
        <begin position="2"/>
        <end position="330"/>
    </location>
</feature>
<feature type="chain" id="PRO_0000426389" description="Capsid protein VP4">
    <location>
        <begin position="2"/>
        <end position="69"/>
    </location>
</feature>
<feature type="chain" id="PRO_0000426390" description="Capsid protein VP2">
    <location>
        <begin position="70"/>
        <end position="330"/>
    </location>
</feature>
<feature type="chain" id="PRO_0000426391" description="Capsid protein VP3">
    <location>
        <begin position="331"/>
        <end position="568"/>
    </location>
</feature>
<feature type="chain" id="PRO_0000426392" description="Capsid protein VP1">
    <location>
        <begin position="569"/>
        <end position="857"/>
    </location>
</feature>
<feature type="chain" id="PRO_0000426393" description="P2">
    <location>
        <begin position="858"/>
        <end position="1435"/>
    </location>
</feature>
<feature type="chain" id="PRO_0000426394" description="Protease 2A">
    <location>
        <begin position="858"/>
        <end position="1007"/>
    </location>
</feature>
<feature type="chain" id="PRO_0000039675" description="Protein 2B">
    <location>
        <begin position="1008"/>
        <end position="1106"/>
    </location>
</feature>
<feature type="chain" id="PRO_0000039676" description="Protein 2C">
    <location>
        <begin position="1107"/>
        <end position="1435"/>
    </location>
</feature>
<feature type="chain" id="PRO_0000426395" description="P3">
    <location>
        <begin position="1436"/>
        <end position="2191"/>
    </location>
</feature>
<feature type="chain" id="PRO_0000426396" description="Protein 3AB">
    <location>
        <begin position="1436"/>
        <end position="1546"/>
    </location>
</feature>
<feature type="chain" id="PRO_0000039677" description="Protein 3A">
    <location>
        <begin position="1436"/>
        <end position="1524"/>
    </location>
</feature>
<feature type="chain" id="PRO_0000426397" description="Viral protein genome-linked">
    <location>
        <begin position="1525"/>
        <end position="1546"/>
    </location>
</feature>
<feature type="chain" id="PRO_0000426398" description="Protein 3CD">
    <location>
        <begin position="1547"/>
        <end position="2191"/>
    </location>
</feature>
<feature type="chain" id="PRO_0000426399" description="Protease 3C">
    <location>
        <begin position="1547"/>
        <end position="1729"/>
    </location>
</feature>
<feature type="chain" id="PRO_0000426400" description="RNA-directed RNA polymerase">
    <location>
        <begin position="1730"/>
        <end position="2191"/>
    </location>
</feature>
<feature type="topological domain" description="Cytoplasmic" evidence="9">
    <location>
        <begin position="2"/>
        <end position="1501"/>
    </location>
</feature>
<feature type="intramembrane region" evidence="9">
    <location>
        <begin position="1502"/>
        <end position="1517"/>
    </location>
</feature>
<feature type="topological domain" description="Cytoplasmic" evidence="9">
    <location>
        <begin position="1518"/>
        <end position="2191"/>
    </location>
</feature>
<feature type="domain" description="SF3 helicase" evidence="11">
    <location>
        <begin position="1211"/>
        <end position="1367"/>
    </location>
</feature>
<feature type="domain" description="Peptidase C3" evidence="12">
    <location>
        <begin position="1547"/>
        <end position="1725"/>
    </location>
</feature>
<feature type="domain" description="RdRp catalytic" evidence="10">
    <location>
        <begin position="1956"/>
        <end position="2072"/>
    </location>
</feature>
<feature type="zinc finger region" description="C4-type; degenerate" evidence="1">
    <location>
        <begin position="1375"/>
        <end position="1392"/>
    </location>
</feature>
<feature type="region of interest" description="Amphipathic alpha-helix" evidence="9">
    <location>
        <begin position="566"/>
        <end position="582"/>
    </location>
</feature>
<feature type="region of interest" description="Oligomerization" evidence="2">
    <location>
        <begin position="1107"/>
        <end position="1245"/>
    </location>
</feature>
<feature type="region of interest" description="Membrane-binding" evidence="2">
    <location>
        <begin position="1107"/>
        <end position="1179"/>
    </location>
</feature>
<feature type="region of interest" description="RNA-binding" evidence="2">
    <location>
        <begin position="1128"/>
        <end position="1132"/>
    </location>
</feature>
<feature type="region of interest" description="RNA-binding" evidence="2">
    <location>
        <begin position="1419"/>
        <end position="1426"/>
    </location>
</feature>
<feature type="region of interest" description="Oligomerization" evidence="2">
    <location>
        <begin position="1430"/>
        <end position="1435"/>
    </location>
</feature>
<feature type="active site" description="For protease 2A activity" evidence="2">
    <location>
        <position position="878"/>
    </location>
</feature>
<feature type="active site" description="For protease 2A activity" evidence="2">
    <location>
        <position position="896"/>
    </location>
</feature>
<feature type="active site" description="For protease 2A activity" evidence="2">
    <location>
        <position position="967"/>
    </location>
</feature>
<feature type="active site" description="For protease 3C activity" evidence="12">
    <location>
        <position position="1586"/>
    </location>
</feature>
<feature type="active site" description="For protease 3C activity" evidence="12">
    <location>
        <position position="1617"/>
    </location>
</feature>
<feature type="active site" description="For protease 3C activity" evidence="12">
    <location>
        <position position="1693"/>
    </location>
</feature>
<feature type="binding site" evidence="8">
    <location>
        <position position="913"/>
    </location>
    <ligand>
        <name>Zn(2+)</name>
        <dbReference type="ChEBI" id="CHEBI:29105"/>
        <label>1</label>
        <note>structural</note>
    </ligand>
</feature>
<feature type="binding site" evidence="8">
    <location>
        <position position="915"/>
    </location>
    <ligand>
        <name>Zn(2+)</name>
        <dbReference type="ChEBI" id="CHEBI:29105"/>
        <label>1</label>
        <note>structural</note>
    </ligand>
</feature>
<feature type="binding site" evidence="8">
    <location>
        <position position="973"/>
    </location>
    <ligand>
        <name>Zn(2+)</name>
        <dbReference type="ChEBI" id="CHEBI:29105"/>
        <label>1</label>
        <note>structural</note>
    </ligand>
</feature>
<feature type="binding site" evidence="8">
    <location>
        <position position="975"/>
    </location>
    <ligand>
        <name>Zn(2+)</name>
        <dbReference type="ChEBI" id="CHEBI:29105"/>
        <label>1</label>
        <note>structural</note>
    </ligand>
</feature>
<feature type="binding site" evidence="1">
    <location>
        <position position="1375"/>
    </location>
    <ligand>
        <name>Zn(2+)</name>
        <dbReference type="ChEBI" id="CHEBI:29105"/>
        <label>2</label>
    </ligand>
</feature>
<feature type="binding site" evidence="1">
    <location>
        <position position="1387"/>
    </location>
    <ligand>
        <name>Zn(2+)</name>
        <dbReference type="ChEBI" id="CHEBI:29105"/>
        <label>2</label>
    </ligand>
</feature>
<feature type="binding site" evidence="1">
    <location>
        <position position="1392"/>
    </location>
    <ligand>
        <name>Zn(2+)</name>
        <dbReference type="ChEBI" id="CHEBI:29105"/>
        <label>2</label>
    </ligand>
</feature>
<feature type="binding site" evidence="2">
    <location>
        <position position="1962"/>
    </location>
    <ligand>
        <name>Mg(2+)</name>
        <dbReference type="ChEBI" id="CHEBI:18420"/>
        <label>1</label>
        <note>catalytic; for RdRp activity</note>
    </ligand>
</feature>
<feature type="binding site" evidence="2">
    <location>
        <position position="1962"/>
    </location>
    <ligand>
        <name>Mg(2+)</name>
        <dbReference type="ChEBI" id="CHEBI:18420"/>
        <label>2</label>
        <note>catalytic; for RdRp activity</note>
    </ligand>
</feature>
<feature type="binding site" evidence="2">
    <location>
        <position position="2058"/>
    </location>
    <ligand>
        <name>Mg(2+)</name>
        <dbReference type="ChEBI" id="CHEBI:18420"/>
        <label>1</label>
        <note>catalytic; for RdRp activity</note>
    </ligand>
</feature>
<feature type="binding site" evidence="2">
    <location>
        <position position="2058"/>
    </location>
    <ligand>
        <name>Mg(2+)</name>
        <dbReference type="ChEBI" id="CHEBI:18420"/>
        <label>2</label>
        <note>catalytic; for RdRp activity</note>
    </ligand>
</feature>
<feature type="site" description="Cleavage; by autolysis" evidence="2">
    <location>
        <begin position="69"/>
        <end position="70"/>
    </location>
</feature>
<feature type="site" description="Cleavage; by protease 3C" evidence="3">
    <location>
        <begin position="330"/>
        <end position="331"/>
    </location>
</feature>
<feature type="site" description="Cleavage; by autolysis" evidence="3">
    <location>
        <begin position="857"/>
        <end position="858"/>
    </location>
</feature>
<feature type="site" description="Cleavage; by protease 3C" evidence="3">
    <location>
        <begin position="1007"/>
        <end position="1008"/>
    </location>
</feature>
<feature type="site" description="Cleavage; by protease 3C" evidence="3">
    <location>
        <begin position="1106"/>
        <end position="1107"/>
    </location>
</feature>
<feature type="site" description="Involved in the interaction with host RTN3" evidence="7">
    <location>
        <position position="1131"/>
    </location>
</feature>
<feature type="site" description="Cleavage; by protease 3C" evidence="3">
    <location>
        <begin position="1435"/>
        <end position="1436"/>
    </location>
</feature>
<feature type="site" description="Cleavage; by protease 3C" evidence="3">
    <location>
        <begin position="1524"/>
        <end position="1525"/>
    </location>
</feature>
<feature type="site" description="Cleavage; by protease 3C" evidence="3">
    <location>
        <begin position="1546"/>
        <end position="1547"/>
    </location>
</feature>
<feature type="site" description="Cleavage; by protease 3C" evidence="3">
    <location>
        <begin position="1729"/>
        <end position="1730"/>
    </location>
</feature>
<feature type="modified residue" description="O-(5'-phospho-RNA)-tyrosine" evidence="2">
    <location>
        <position position="1527"/>
    </location>
</feature>
<feature type="lipid moiety-binding region" description="N-myristoyl glycine; by host" evidence="2">
    <location>
        <position position="2"/>
    </location>
</feature>
<reference key="1">
    <citation type="submission" date="1994-10" db="EMBL/GenBank/DDBJ databases">
        <title>The genome of echovirus 6.</title>
        <authorList>
            <person name="Righthand V.F."/>
            <person name="Gratsch T.E."/>
            <person name="Blackburn R.V."/>
        </authorList>
    </citation>
    <scope>NUCLEOTIDE SEQUENCE [GENOMIC RNA]</scope>
</reference>
<reference key="2">
    <citation type="journal article" date="1994" name="Virology">
        <title>Construction of a recombinant cDNA of echovirus 6 that established a persistent in vitro infection.</title>
        <authorList>
            <person name="Gratsch T.E."/>
            <person name="Righthand V.F."/>
        </authorList>
    </citation>
    <scope>NUCLEOTIDE SEQUENCE [GENOMIC RNA] OF 1526-2191</scope>
</reference>
<reference key="3">
    <citation type="journal article" date="2019" name="Cell">
        <title>Human Neonatal Fc Receptor Is the Cellular Uncoating Receptor for Enterovirus B.</title>
        <authorList>
            <person name="Zhao X."/>
            <person name="Zhang G."/>
            <person name="Liu S."/>
            <person name="Chen X."/>
            <person name="Peng R."/>
            <person name="Dai L."/>
            <person name="Qu X."/>
            <person name="Li S."/>
            <person name="Song H."/>
            <person name="Gao Z."/>
            <person name="Yuan P."/>
            <person name="Liu Z."/>
            <person name="Li C."/>
            <person name="Shang Z."/>
            <person name="Li Y."/>
            <person name="Zhang M."/>
            <person name="Qi J."/>
            <person name="Wang H."/>
            <person name="Du N."/>
            <person name="Wu Y."/>
            <person name="Bi Y."/>
            <person name="Gao S."/>
            <person name="Shi Y."/>
            <person name="Yan J."/>
            <person name="Zhang Y."/>
            <person name="Xie Z."/>
            <person name="Wei W."/>
            <person name="Gao G.F."/>
        </authorList>
    </citation>
    <scope>FUNCTION (CAPSID PROTEIN VP1)</scope>
    <scope>FUNCTION (CAPSID PROTEIN VP2)</scope>
    <scope>FUNCTION (CAPSID PROTEIN VP3)</scope>
    <scope>FUNCTION (CAPSID PROTEIN VP4)</scope>
    <scope>SUBCELLULAR LOCATION (CAPSID PROTEIN VP1)</scope>
    <scope>SUBCELLULAR LOCATION (CAPSID PROTEIN VP2)</scope>
    <scope>SUBCELLULAR LOCATION (CAPSID PROTEIN VP3)</scope>
    <scope>SUBCELLULAR LOCATION (CAPSID PROTEIN VP4)</scope>
    <scope>INTERACTION WITH CAPSID PROTEIN VP4 (CAPSID PROTEIN VP1)</scope>
    <scope>INTERACTION WITH CAPSID PROTEIN VP1 (CAPSID PROTEIN VP2)</scope>
    <scope>INTERACTION WITH CAPSID PROTEIN VP3 (CAPSID PROTEIN VP2)</scope>
    <scope>INTERACTION WITH CAPSID PROTEIN VP1 (CAPSID PROTEIN VP3)</scope>
    <scope>INTERACTION WITH CAPSID PROTEIN VP1 (CAPSID PROTEIN VP4)</scope>
    <scope>INTERACTION WITH CAPSID PROTEIN VP3 (CAPSID PROTEIN VP4)</scope>
    <scope>INTERACTION WITH CAPSID PROTEIN VP4 (CAPSID PROTEIN VP3)</scope>
    <scope>INTERACTION WITH CAPSID PROTEIN VP2 (CAPSID PROTEIN VP3)</scope>
    <scope>INTERACTION WITH HOST CD55 (CAPSID PROTEIN VP1)</scope>
    <scope>INTERACTION WITH HOST FCGRT (CAPSID PROTEIN VP1)</scope>
    <scope>INTERACTION WITH HOST CD55 (CAPSID PROTEIN VP2)</scope>
    <scope>INTERACTION WITH HOST FCGRT (CAPSID PROTEIN VP2)</scope>
    <scope>INTERACTION WITH HOST FCGRT (CAPSID PROTEIN VP3)</scope>
</reference>
<organism>
    <name type="scientific">Echovirus 6 (strain Charles)</name>
    <dbReference type="NCBI Taxonomy" id="103913"/>
    <lineage>
        <taxon>Viruses</taxon>
        <taxon>Riboviria</taxon>
        <taxon>Orthornavirae</taxon>
        <taxon>Pisuviricota</taxon>
        <taxon>Pisoniviricetes</taxon>
        <taxon>Picornavirales</taxon>
        <taxon>Picornaviridae</taxon>
        <taxon>Ensavirinae</taxon>
        <taxon>Enterovirus</taxon>
        <taxon>Enterovirus B</taxon>
    </lineage>
</organism>
<organismHost>
    <name type="scientific">Homo sapiens</name>
    <name type="common">Human</name>
    <dbReference type="NCBI Taxonomy" id="9606"/>
</organismHost>
<sequence length="2191" mass="245277">MGAQVSTQKTGAHETGLSASGNSIIHYTNINYYKDAASNSANRQDFTQDPGKFTEPVKDIMAKTLPALNSPSAEECGYSDRVRSITLGNSTITTQESANVVVGYGVWPDYLKDDEATAEDQPTNPDVATCRFYTLDSVSWMKESQGWWWKFPDALRDMGLFGQNMQYHYLGRSGYTIHVQCNASKFHQGCLLVVCVPEAEMGAATVNEKINREHLSNGEVANTFTGTKSSNTNGVQQAVFNAGMGVRVGNLTVFPHQWINLRTNNCATIVMPYINSVPMDNMFRHYNFTLMIIPFAKLDYAAGSSTYIPITVTVAPMCAEYNGLRLAGHQGLPVMSTPGSNQFLTSDDYQSPTAMPQFDVTPEMHIPGEVKNLMEIAEVDSVVPVNNVNENVNSLEAYRIPVHSVTETGAQVFGFTLQPGADSVMERTLHGEILNYYANWSGSIKLTFMYCGSAMATGKFLLAYSPPGAGVPKNRKEAMLGTHMIWDIGLQSRCVLCVPWISQTHYRFVSKDSYTDAGFITCWYQTSIVVPAEVQNQSVILCFVSACNDFSVRLLRDSPFVTQTAFYQNDVQNAVERSIVRVADTLPSGPSNSESIPALTAAETGHTSQVVPSDTIQTRHVRNFHVRSESSVENFLSRSACVYIVEYKTQDTTPDKMYDSWVINTRQVAQLRRKLEFFTYVRFDVEVTFVITSVQDDSTRQNTDTPVLTHQIMYVPPGGPIPHAVDDYNWQTSTNPSVFWTEGNAPPRMSIPFMSVGNAYSNFYDGWSHFSQTGVYGFNTLNNMGKLYFRHVNDRTISPITSKVRIYFKPKHVKAWVPRPPRLCEYTHKDNVDYEPKGVTTSRTSITITNSKHMETHGAFGQQSGAAYVGNYRVVNRHLATHTDWQNCVWEDYNRDLLVSTTTAHGCDTIARCHCTTGVYFCASRNKHHPVVFEGPGLVEVQESGYYPKRYQSHVLLAAGLSEPGDCGGILRCEHGVIGIVTMGGEGVVGFADVRDLLWLEDDAMEQGVKDYVEQLGNAFGSGFTNQICEQVNLLKESLIGQDSILEKSLKALVKIISALVIVVRNHDDLITVTATLALIGCTSSPWRWLKQKVSQYYGISMAERQNNGWLKKFTEMTNACKGMEWIAIKIQKFIEWLKVKILPEVREKHEFLNRLKQLPLLESQIATIEQSAPSQSDQEQLFSNVQYFAHYCRKYAPLYAAEAKRVFSLEKKMSNYIQFKSKCRIEPVCLLLHGSPGVGKSVATNLIGRSLAEKLNSSIYSLPPDPDHFDGYKQQAVVIMDDLCQNPDGKDVSLFCQMVSSVDFVPPMAALEEKGILFTSPFVLASTNAGSINAPTVSDSRALARRFHFDMNIEVISMYNQNGKINMPMSVKTCDEECCPVNFKKCCPLVCGKAIQFIDRRTQVRYSLDMLVTEMFREYNHRHSVGATLEALFQGPPVYREIKISVAPEIPPPPAIADLLKSVDSEAVRDYCKEKGWLVPEVNSTLQIEKHVSRAFICLQALTTFVSVAGIIYIIYKLFAGFQGAYTGMPNQKPKVPTLRQAKVQGPAFEFAVAMMKRNSSTVKTEYGEFTMLGIYDRWAVLPRHAKPGPTILMNDQEVGVVDAKELVDKDGTNLELTLLKLNRNEKFRDIRGFLAKEEVEVNEAVLAINTSKFPNMYIPVGQVTDYGFLNLGGTPTKRMLMYNFPTRAGQCGGVLMSTGKVLGIHVGGNGHQGFSAALLKHYFNDEQGEIEFIESSKDAGYPVINTPSRTKLEPSVFHQVFEGSKEPAVLRNGDPRLKANFEEAIFSKYIGNVNTHVDEYMLEAIDHYAGQLATLDISTEPMKLEDAVYGTEGLEALDLTTSAGYPYVALGIKKRDILSKKTRDLTKLKECMDKYGLNLPMVTYVKDELRSAEKVAKGKSRLIEASSLNDSVAMRQTFGNLYKAFHQNPGIVTGSAVGCDPDLFWSKIPVMLDGHLIAFDYSGYDASLSPVWFACLKLLLEKLGYTHKETNYIDYLCNSHHLYRDKHYFVRGGMPSGCSGTSIFNSMINNIIIRTLMLKVYKGIDLDQFRMIAYGDDVIASYPWPIDASLLAEAGKDYGLIMTPADKGECFNEVTWTNVTFLKRYFRADEQYPFLVHPVMPMKDIHESIRWTKDPKNTQDHVRSLCLLAWHNGEQEYEEFIQKIRSVPVGRCLTLPAFSTLRRKWLDSF</sequence>
<comment type="function">
    <molecule>Capsid protein VP1</molecule>
    <text evidence="2 13">Forms an icosahedral capsid of pseudo T=3 symmetry with capsid proteins VP2 and VP3 (PubMed:31104841). The capsid is 300 Angstroms in diameter, composed of 60 copies of each capsid protein and enclosing the viral positive strand RNA genome (PubMed:31104841). Capsid protein VP1 mainly forms the vertices of the capsid (PubMed:31104841). Capsid protein VP1 interacts with host cell receptor to provide virion attachment to target host cells (By similarity). This attachment induces virion internalization (By similarity). Tyrosine kinases are probably involved in the entry process (By similarity). After binding to its receptor, the capsid undergoes conformational changes (By similarity). Capsid protein VP1 N-terminus (that contains an amphipathic alpha-helix) and capsid protein VP4 are externalized (By similarity). Together, they shape a pore in the host membrane through which viral genome is translocated to host cell cytoplasm (By similarity).</text>
</comment>
<comment type="function">
    <molecule>Capsid protein VP2</molecule>
    <text evidence="13">Forms an icosahedral capsid of pseudo T=3 symmetry with capsid proteins VP2 and VP3 (PubMed:31104841). The capsid is 300 Angstroms in diameter, composed of 60 copies of each capsid protein and enclosing the viral positive strand RNA genome (PubMed:31104841).</text>
</comment>
<comment type="function">
    <molecule>Capsid protein VP3</molecule>
    <text evidence="13">Forms an icosahedral capsid of pseudo T=3 symmetry with capsid proteins VP2 and VP3 (PubMed:31104841). The capsid is 300 Angstroms in diameter, composed of 60 copies of each capsid protein and enclosing the viral positive strand RNA genome (PubMed:31104841).</text>
</comment>
<comment type="function">
    <molecule>Capsid protein VP4</molecule>
    <text evidence="2 13">Lies on the inner surface of the capsid shell (PubMed:31104841). After binding to the host receptor, the capsid undergoes conformational changes (By similarity). Capsid protein VP4 is released, Capsid protein VP1 N-terminus is externalized, and together, they shape a pore in the host membrane through which the viral genome is translocated into the host cell cytoplasm (By similarity).</text>
</comment>
<comment type="function">
    <molecule>Capsid protein VP0</molecule>
    <text evidence="2">Component of immature procapsids, which is cleaved into capsid proteins VP4 and VP2 after maturation (By similarity). Allows the capsid to remain inactive before the maturation step (By similarity).</text>
</comment>
<comment type="function">
    <molecule>Protease 2A</molecule>
    <text evidence="2 3">Cysteine protease that cleaves viral polyprotein and specific host proteins (By similarity). It is responsible for the autocatalytic cleavage between the P1 and P2 regions, which is the first cleavage occurring in the polyprotein (By similarity). Also cleaves the host translation initiation factor EIF4G1, in order to shut down the capped cellular mRNA translation (By similarity). Inhibits the host nucleus-cytoplasm protein and RNA trafficking by cleaving host members of the nuclear pores (By similarity). Counteracts stress granule formation probably by antagonizing its assembly or promoting its dissassembly (By similarity).</text>
</comment>
<comment type="function">
    <molecule>Protein 2B</molecule>
    <text evidence="2">Plays an essential role in the virus replication cycle by acting as a viroporin. Creates a pore in the host endoplasmic reticulum and as a consequence releases Ca2+ in the cytoplasm of infected cell. In turn, high levels of cytoplasmic calcium may trigger membrane trafficking and transport of viral ER-associated proteins to viroplasms, sites of viral genome replication.</text>
</comment>
<comment type="function">
    <molecule>Protein 2C</molecule>
    <text evidence="2">Induces and associates with structural rearrangements of intracellular membranes. Displays RNA-binding, nucleotide binding and NTPase activities. May play a role in virion morphogenesis and viral RNA encapsidation by interacting with the capsid protein VP3.</text>
</comment>
<comment type="function">
    <molecule>Protein 3AB</molecule>
    <text evidence="2">Localizes the viral replication complex to the surface of membranous vesicles. Together with protein 3CD binds the Cis-Active RNA Element (CRE) which is involved in RNA synthesis initiation. Acts as a cofactor to stimulate the activity of 3D polymerase, maybe through a nucleid acid chaperone activity.</text>
</comment>
<comment type="function">
    <molecule>Protein 3A</molecule>
    <text evidence="2 5">Localizes the viral replication complex to the surface of membranous vesicles (By similarity). It inhibits host cell endoplasmic reticulum-to-Golgi apparatus transport and causes the disassembly of the Golgi complex, possibly through GBF1 interaction (By similarity). This would result in depletion of MHC, trail receptors and IFN receptors at the host cell surface (By similarity). Plays an essential role in viral RNA replication by recruiting ACBD3 and PI4KB at the viral replication sites, thereby allowing the formation of the rearranged membranous structures where viral replication takes place (By similarity).</text>
</comment>
<comment type="function">
    <molecule>Viral protein genome-linked</molecule>
    <text evidence="2">Acts as a primer for viral RNA replication and remains covalently bound to viral genomic RNA. VPg is uridylylated prior to priming replication into VPg-pUpU. The oriI viral genomic sequence may act as a template for this. The VPg-pUpU is then used as primer on the genomic RNA poly(A) by the RNA-dependent RNA polymerase to replicate the viral genome. During genome replication, the VPg-RNA linkage is removed by the host TDP2, thereby accelerating replication. During the late stage of the replication cycle, host TDP2 is excluded from sites of viral RNA synthesis and encapsidation, allowing for the generation of progeny virions.</text>
</comment>
<comment type="function">
    <molecule>Protein 3CD</molecule>
    <text evidence="2">Involved in the viral replication complex and viral polypeptide maturation. It exhibits protease activity with a specificity and catalytic efficiency that is different from protease 3C. Protein 3CD binds to the 5'UTR of the viral genome.</text>
</comment>
<comment type="function">
    <molecule>RNA-directed RNA polymerase</molecule>
    <text evidence="2">Replicates the viral genomic RNA on the surface of intracellular membranes. May form linear arrays of subunits that propagate along a strong head-to-tail interaction called interface-I. Covalently attaches UMP to a tyrosine of VPg, which is used to prime RNA synthesis. The positive stranded RNA genome is first replicated at virus induced membranous vesicles, creating a dsRNA genomic replication form. This dsRNA is then used as template to synthesize positive stranded RNA genomes. ss(+)RNA genomes are either translated, replicated or encapsidated.</text>
</comment>
<comment type="function">
    <molecule>Protease 3C</molecule>
    <text evidence="2 4">Major viral protease that mediates proteolytic processing of the polyprotein (By similarity). Cleaves host EIF5B, contributing to host translation shutoff (By similarity). Also cleaves host PABPC1, contributing to host translation shutoff (By similarity). Cleaves host NLRP1, triggers host N-glycine-mediated degradation of the autoinhibitory NLRP1 N-terminal fragment (By similarity).</text>
</comment>
<comment type="catalytic activity">
    <molecule>Protein 2C</molecule>
    <reaction evidence="2">
        <text>a ribonucleoside 5'-triphosphate + H2O = a ribonucleoside 5'-diphosphate + phosphate + H(+)</text>
        <dbReference type="Rhea" id="RHEA:23680"/>
        <dbReference type="ChEBI" id="CHEBI:15377"/>
        <dbReference type="ChEBI" id="CHEBI:15378"/>
        <dbReference type="ChEBI" id="CHEBI:43474"/>
        <dbReference type="ChEBI" id="CHEBI:57930"/>
        <dbReference type="ChEBI" id="CHEBI:61557"/>
        <dbReference type="EC" id="3.6.1.15"/>
    </reaction>
</comment>
<comment type="catalytic activity">
    <molecule>Protease 2A</molecule>
    <reaction evidence="2">
        <text>Selective cleavage of Tyr-|-Gly bond in the picornavirus polyprotein.</text>
        <dbReference type="EC" id="3.4.22.29"/>
    </reaction>
</comment>
<comment type="catalytic activity">
    <molecule>RNA-directed RNA polymerase</molecule>
    <reaction evidence="10">
        <text>RNA(n) + a ribonucleoside 5'-triphosphate = RNA(n+1) + diphosphate</text>
        <dbReference type="Rhea" id="RHEA:21248"/>
        <dbReference type="Rhea" id="RHEA-COMP:14527"/>
        <dbReference type="Rhea" id="RHEA-COMP:17342"/>
        <dbReference type="ChEBI" id="CHEBI:33019"/>
        <dbReference type="ChEBI" id="CHEBI:61557"/>
        <dbReference type="ChEBI" id="CHEBI:140395"/>
        <dbReference type="EC" id="2.7.7.48"/>
    </reaction>
</comment>
<comment type="catalytic activity">
    <molecule>Protease 3C</molecule>
    <reaction evidence="12">
        <text>Selective cleavage of Gln-|-Gly bond in the poliovirus polyprotein. In other picornavirus reactions Glu may be substituted for Gln, and Ser or Thr for Gly.</text>
        <dbReference type="EC" id="3.4.22.28"/>
    </reaction>
</comment>
<comment type="cofactor">
    <molecule>RNA-directed RNA polymerase</molecule>
    <cofactor evidence="2">
        <name>Mg(2+)</name>
        <dbReference type="ChEBI" id="CHEBI:18420"/>
    </cofactor>
    <text evidence="2 5">Binds 2 magnesium ions that constitute a dinuclear catalytic metal center (By similarity). The magnesium ions are not prebound but only present for catalysis (By similarity). Requires the presence of 3CDpro or 3CPro (By similarity).</text>
</comment>
<comment type="activity regulation">
    <molecule>RNA-directed RNA polymerase</molecule>
    <text evidence="2">Replication or transcription is subject to high level of random mutations by the nucleotide analog ribavirin.</text>
</comment>
<comment type="subunit">
    <molecule>Capsid protein VP0</molecule>
    <text evidence="2">Interacts with capsid protein VP1 and capsid protein VP3 to form heterotrimeric protomers.</text>
</comment>
<comment type="subunit">
    <molecule>Capsid protein VP1</molecule>
    <text evidence="2 13">Interacts with capsid protein VP0, and capsid protein VP3 to form heterotrimeric protomers (By similarity). Five protomers subsequently associate to form pentamers which serve as building blocks for the capsid (By similarity). Interacts with capsid protein VP2, capsid protein VP3 and capsid protein VP4 following cleavage of capsid protein VP0 (PubMed:31104841). Interacts with host CD55 and FCGRT; these interactions promote virus attachment to the host cell and subsequent internalization (PubMed:31104841).</text>
</comment>
<comment type="subunit">
    <molecule>Capsid protein VP2</molecule>
    <text evidence="13">Interacts with capsid protein VP1 and capsid protein VP3 in the mature capsid (PubMed:31104841). Interacts with host CD55 and FCGRT; these interactions promote virus attachment to the host cell and subsequent internalization (PubMed:31104841).</text>
</comment>
<comment type="subunit">
    <molecule>Capsid protein VP3</molecule>
    <text evidence="2 13">Interacts with capsid protein VP0 and capsid protein VP1 to form heterotrimeric protomers (By similarity). Five protomers subsequently associate to form pentamers which serve as building blocks for the capsid (By similarity). Interacts with capsid protein VP4 in the mature capsid (PubMed:31104841). Interacts with protein 2C; this interaction may be important for virion morphogenesis (By similarity). Interacts with host FCGRT; this interaction promotes virus attachment to the host cell and subsequent internalization (PubMed:31104841).</text>
</comment>
<comment type="subunit">
    <molecule>Capsid protein VP4</molecule>
    <text evidence="13">Interacts with capsid protein VP1 and capsid protein VP3.</text>
</comment>
<comment type="subunit">
    <molecule>Protease 2A</molecule>
    <text evidence="6">Homodimer.</text>
</comment>
<comment type="subunit">
    <molecule>Protein 2C</molecule>
    <text evidence="2">Homohexamer; forms a hexameric ring structure with 6-fold symmetry characteristic of AAA+ ATPases (By similarity). Interacts (via N-terminus) with host RTN3 (via reticulon domain); this interaction is important for viral replication (By similarity). Interacts with capsid protein VP3; this interaction may be important for virion morphogenesis (By similarity).</text>
</comment>
<comment type="subunit">
    <molecule>Protein 3AB</molecule>
    <text evidence="2">Interacts with protein 3CD.</text>
</comment>
<comment type="subunit">
    <molecule>Protein 3A</molecule>
    <text evidence="2">Homodimer (By similarity). Interacts with host GBF1 (By similarity). Interacts (via GOLD domain) with host ACBD3 (via GOLD domain); this interaction allows the formation of a viral protein 3A/ACBD3 heterotetramer with a 2:2 stoichiometry, which will stimulate the recruitment of host PI4KB in order to synthesize PI4P at the viral RNA replication sites (By similarity).</text>
</comment>
<comment type="subunit">
    <molecule>Viral protein genome-linked</molecule>
    <text evidence="2">Interacts with RNA-directed RNA polymerase.</text>
</comment>
<comment type="subunit">
    <molecule>Protein 3CD</molecule>
    <text evidence="2">Interacts with protein 3AB and with RNA-directed RNA polymerase.</text>
</comment>
<comment type="subunit">
    <molecule>RNA-directed RNA polymerase</molecule>
    <text evidence="2">Interacts with Viral protein genome-linked and with protein 3CD.</text>
</comment>
<comment type="subcellular location">
    <molecule>Capsid protein VP0</molecule>
    <subcellularLocation>
        <location>Virion</location>
    </subcellularLocation>
    <subcellularLocation>
        <location evidence="14">Host cytoplasm</location>
    </subcellularLocation>
</comment>
<comment type="subcellular location">
    <molecule>Capsid protein VP4</molecule>
    <subcellularLocation>
        <location evidence="13">Virion</location>
    </subcellularLocation>
</comment>
<comment type="subcellular location">
    <molecule>Capsid protein VP2</molecule>
    <subcellularLocation>
        <location evidence="13">Virion</location>
    </subcellularLocation>
    <subcellularLocation>
        <location evidence="14">Host cytoplasm</location>
    </subcellularLocation>
</comment>
<comment type="subcellular location">
    <molecule>Capsid protein VP3</molecule>
    <subcellularLocation>
        <location evidence="13">Virion</location>
    </subcellularLocation>
    <subcellularLocation>
        <location evidence="14">Host cytoplasm</location>
    </subcellularLocation>
</comment>
<comment type="subcellular location">
    <molecule>Capsid protein VP1</molecule>
    <subcellularLocation>
        <location evidence="13">Virion</location>
    </subcellularLocation>
    <subcellularLocation>
        <location evidence="14">Host cytoplasm</location>
    </subcellularLocation>
</comment>
<comment type="subcellular location">
    <molecule>Protein 2B</molecule>
    <subcellularLocation>
        <location evidence="14">Host cytoplasmic vesicle membrane</location>
        <topology evidence="14">Peripheral membrane protein</topology>
        <orientation evidence="14">Cytoplasmic side</orientation>
    </subcellularLocation>
    <text>Probably localizes to the surface of intracellular membrane vesicles that are induced after virus infection as the site for viral RNA replication. These vesicles are derived from the endoplasmic reticulum.</text>
</comment>
<comment type="subcellular location">
    <molecule>Protein 2C</molecule>
    <subcellularLocation>
        <location evidence="14">Host cytoplasmic vesicle membrane</location>
        <topology evidence="14">Peripheral membrane protein</topology>
        <orientation evidence="14">Cytoplasmic side</orientation>
    </subcellularLocation>
    <text>Probably localizes to the surface of intracellular membrane vesicles that are induced after virus infection as the site for viral RNA replication. These vesicles are derived from the endoplasmic reticulum.</text>
</comment>
<comment type="subcellular location">
    <molecule>Protein 3A</molecule>
    <subcellularLocation>
        <location evidence="14">Host cytoplasmic vesicle membrane</location>
        <topology evidence="14">Peripheral membrane protein</topology>
        <orientation evidence="14">Cytoplasmic side</orientation>
    </subcellularLocation>
    <text>Probably localizes to the surface of intracellular membrane vesicles that are induced after virus infection as the site for viral RNA replication. These vesicles are derived from the endoplasmic reticulum.</text>
</comment>
<comment type="subcellular location">
    <molecule>Protein 3AB</molecule>
    <subcellularLocation>
        <location evidence="14">Host cytoplasmic vesicle membrane</location>
        <topology evidence="14">Peripheral membrane protein</topology>
        <orientation evidence="14">Cytoplasmic side</orientation>
    </subcellularLocation>
    <text>Probably localizes to the surface of intracellular membrane vesicles that are induced after virus infection as the site for viral RNA replication. These vesicles are derived from the endoplasmic reticulum.</text>
</comment>
<comment type="subcellular location">
    <molecule>Viral protein genome-linked</molecule>
    <subcellularLocation>
        <location evidence="2">Virion</location>
    </subcellularLocation>
    <subcellularLocation>
        <location evidence="7">Host cytoplasm</location>
    </subcellularLocation>
</comment>
<comment type="subcellular location">
    <molecule>Protease 3C</molecule>
    <subcellularLocation>
        <location>Host cytoplasm</location>
    </subcellularLocation>
</comment>
<comment type="subcellular location">
    <molecule>Protein 3CD</molecule>
    <subcellularLocation>
        <location evidence="2">Host nucleus</location>
    </subcellularLocation>
    <subcellularLocation>
        <location evidence="2">Host cytoplasm</location>
    </subcellularLocation>
    <subcellularLocation>
        <location evidence="14">Host cytoplasmic vesicle membrane</location>
        <topology evidence="14">Peripheral membrane protein</topology>
        <orientation evidence="14">Cytoplasmic side</orientation>
    </subcellularLocation>
    <text>Probably localizes to the surface of intracellular membrane vesicles that are induced after virus infection as the site for viral RNA replication. These vesicles are derived from the endoplasmic reticulum.</text>
</comment>
<comment type="subcellular location">
    <molecule>RNA-directed RNA polymerase</molecule>
    <subcellularLocation>
        <location evidence="14">Host cytoplasmic vesicle membrane</location>
        <topology evidence="14">Peripheral membrane protein</topology>
        <orientation evidence="14">Cytoplasmic side</orientation>
    </subcellularLocation>
    <text>Probably localizes to the surface of intracellular membrane vesicles that are induced after virus infection as the site for viral RNA replication. These vesicles are derived from the endoplasmic reticulum.</text>
</comment>
<comment type="domain">
    <molecule>Protein 2C</molecule>
    <text evidence="1 2">The N-terminus has membrane-binding (By similarity). The N-terminus also displays RNA-binding properties (By similarity). The N-terminus is involved in oligomerization (By similarity). The central part contains an ATPase domain and a degenerate C4-type zinc-finger with only 3 cysteines (By similarity). The C-terminus is involved in RNA-binding (By similarity). The extreme C-terminus contains a region involved in oligomerization (By similarity).</text>
</comment>
<comment type="PTM">
    <molecule>Genome polyprotein</molecule>
    <text evidence="2">Specific enzymatic cleavages in vivo by the viral proteases yield processing intermediates and the mature proteins.</text>
</comment>
<comment type="PTM">
    <molecule>Capsid protein VP0</molecule>
    <text evidence="2">Myristoylation is required for the formation of pentamers during virus assembly. Further assembly of 12 pentamers and a molecule of genomic RNA generates the provirion.</text>
</comment>
<comment type="PTM">
    <molecule>Capsid protein VP0</molecule>
    <text evidence="2">During virion maturation, immature virions are rendered infectious following cleavage of VP0 into VP4 and VP2. This maturation seems to be an autocatalytic event triggered by the presence of RNA in the capsid and it is followed by a conformational change infectious virion.</text>
</comment>
<comment type="PTM">
    <molecule>Capsid protein VP4</molecule>
    <text evidence="2">Myristoylation is required during RNA encapsidation and formation of the mature virus particle.</text>
</comment>
<comment type="PTM">
    <molecule>Viral protein genome-linked</molecule>
    <text evidence="2">VPg is uridylylated by the polymerase into VPg-pUpU. This acts as a nucleotide-peptide primer for the genomic RNA replication.</text>
</comment>
<comment type="similarity">
    <text evidence="14">Belongs to the picornaviruses polyprotein family.</text>
</comment>
<name>POLG_EC06C</name>
<proteinExistence type="evidence at protein level"/>
<keyword id="KW-1072">Activation of host autophagy by virus</keyword>
<keyword id="KW-0067">ATP-binding</keyword>
<keyword id="KW-0068">Autocatalytic cleavage</keyword>
<keyword id="KW-0167">Capsid protein</keyword>
<keyword id="KW-0191">Covalent protein-RNA linkage</keyword>
<keyword id="KW-0235">DNA replication</keyword>
<keyword id="KW-1262">Eukaryotic host gene expression shutoff by virus</keyword>
<keyword id="KW-1193">Eukaryotic host translation shutoff by virus</keyword>
<keyword id="KW-0347">Helicase</keyword>
<keyword id="KW-1035">Host cytoplasm</keyword>
<keyword id="KW-1036">Host cytoplasmic vesicle</keyword>
<keyword id="KW-1190">Host gene expression shutoff by virus</keyword>
<keyword id="KW-1043">Host membrane</keyword>
<keyword id="KW-1192">Host mRNA suppression by virus</keyword>
<keyword id="KW-1048">Host nucleus</keyword>
<keyword id="KW-0945">Host-virus interaction</keyword>
<keyword id="KW-0378">Hydrolase</keyword>
<keyword id="KW-1090">Inhibition of host innate immune response by virus</keyword>
<keyword id="KW-1099">Inhibition of host mRNA nuclear export by virus</keyword>
<keyword id="KW-1088">Inhibition of host RIG-I by virus</keyword>
<keyword id="KW-1113">Inhibition of host RLR pathway by virus</keyword>
<keyword id="KW-0407">Ion channel</keyword>
<keyword id="KW-0406">Ion transport</keyword>
<keyword id="KW-0449">Lipoprotein</keyword>
<keyword id="KW-0460">Magnesium</keyword>
<keyword id="KW-0472">Membrane</keyword>
<keyword id="KW-0479">Metal-binding</keyword>
<keyword id="KW-0519">Myristate</keyword>
<keyword id="KW-0547">Nucleotide-binding</keyword>
<keyword id="KW-0548">Nucleotidyltransferase</keyword>
<keyword id="KW-0597">Phosphoprotein</keyword>
<keyword id="KW-1172">Pore-mediated penetration of viral genome into host cell</keyword>
<keyword id="KW-0645">Protease</keyword>
<keyword id="KW-0677">Repeat</keyword>
<keyword id="KW-0694">RNA-binding</keyword>
<keyword id="KW-0696">RNA-directed RNA polymerase</keyword>
<keyword id="KW-1143">T=pseudo3 icosahedral capsid protein</keyword>
<keyword id="KW-0788">Thiol protease</keyword>
<keyword id="KW-0808">Transferase</keyword>
<keyword id="KW-0813">Transport</keyword>
<keyword id="KW-1161">Viral attachment to host cell</keyword>
<keyword id="KW-0899">Viral immunoevasion</keyword>
<keyword id="KW-1182">Viral ion channel</keyword>
<keyword id="KW-1162">Viral penetration into host cytoplasm</keyword>
<keyword id="KW-0693">Viral RNA replication</keyword>
<keyword id="KW-0946">Virion</keyword>
<keyword id="KW-1164">Virus endocytosis by host</keyword>
<keyword id="KW-1160">Virus entry into host cell</keyword>
<keyword id="KW-0862">Zinc</keyword>
<keyword id="KW-0863">Zinc-finger</keyword>
<accession>Q66474</accession>